<feature type="signal peptide" evidence="7 8 9">
    <location>
        <begin position="1"/>
        <end position="44"/>
    </location>
</feature>
<feature type="chain" id="PRO_0000017740" description="Triacylglycerol lipase">
    <location>
        <begin position="45"/>
        <end position="364"/>
    </location>
</feature>
<feature type="domain" description="AB hydrolase-1" evidence="3">
    <location>
        <begin position="54"/>
        <end position="266"/>
    </location>
</feature>
<feature type="active site" description="Nucleophile" evidence="15 16 17 20 21 22 23 25 26 28 30 31">
    <location>
        <position position="131"/>
    </location>
</feature>
<feature type="active site" description="Charge relay system" evidence="15 20 21 22 30 31">
    <location>
        <position position="308"/>
    </location>
</feature>
<feature type="active site" description="Charge relay system" evidence="15 20 21 22 30 31">
    <location>
        <position position="330"/>
    </location>
</feature>
<feature type="binding site" evidence="4 5 6 12 23 25 26 28 30">
    <location>
        <position position="61"/>
    </location>
    <ligand>
        <name>substrate</name>
    </ligand>
</feature>
<feature type="binding site" evidence="4 5 6 12 23 25 26 28 30">
    <location>
        <position position="132"/>
    </location>
    <ligand>
        <name>substrate</name>
    </ligand>
</feature>
<feature type="binding site" evidence="4 5 6 10 11 12 23 24 25 26 27 28 29 30 31">
    <location>
        <position position="286"/>
    </location>
    <ligand>
        <name>Ca(2+)</name>
        <dbReference type="ChEBI" id="CHEBI:29108"/>
    </ligand>
</feature>
<feature type="binding site" evidence="4 5 6 10 11 12 23 24 25 26 27 28 29 30 31">
    <location>
        <position position="332"/>
    </location>
    <ligand>
        <name>Ca(2+)</name>
        <dbReference type="ChEBI" id="CHEBI:29108"/>
    </ligand>
</feature>
<feature type="binding site" evidence="4 5 6 10 11 12 23 24 25 26 27 28 29 30 31">
    <location>
        <position position="336"/>
    </location>
    <ligand>
        <name>Ca(2+)</name>
        <dbReference type="ChEBI" id="CHEBI:29108"/>
    </ligand>
</feature>
<feature type="binding site" evidence="4 5 6 10 11 12 23 24 25 26 27 28 29 30 31">
    <location>
        <position position="340"/>
    </location>
    <ligand>
        <name>Ca(2+)</name>
        <dbReference type="ChEBI" id="CHEBI:29108"/>
    </ligand>
</feature>
<feature type="disulfide bond" evidence="10">
    <location>
        <begin position="234"/>
        <end position="314"/>
    </location>
</feature>
<feature type="turn" evidence="32">
    <location>
        <begin position="46"/>
        <end position="49"/>
    </location>
</feature>
<feature type="strand" evidence="33">
    <location>
        <begin position="55"/>
        <end position="58"/>
    </location>
</feature>
<feature type="strand" evidence="34">
    <location>
        <begin position="61"/>
        <end position="64"/>
    </location>
</feature>
<feature type="strand" evidence="33">
    <location>
        <begin position="65"/>
        <end position="67"/>
    </location>
</feature>
<feature type="turn" evidence="33">
    <location>
        <begin position="68"/>
        <end position="70"/>
    </location>
</feature>
<feature type="strand" evidence="33">
    <location>
        <begin position="71"/>
        <end position="74"/>
    </location>
</feature>
<feature type="helix" evidence="33">
    <location>
        <begin position="77"/>
        <end position="83"/>
    </location>
</feature>
<feature type="strand" evidence="33">
    <location>
        <begin position="88"/>
        <end position="90"/>
    </location>
</feature>
<feature type="strand" evidence="35">
    <location>
        <begin position="95"/>
        <end position="97"/>
    </location>
</feature>
<feature type="strand" evidence="33">
    <location>
        <begin position="99"/>
        <end position="101"/>
    </location>
</feature>
<feature type="helix" evidence="33">
    <location>
        <begin position="105"/>
        <end position="120"/>
    </location>
</feature>
<feature type="strand" evidence="33">
    <location>
        <begin position="125"/>
        <end position="130"/>
    </location>
</feature>
<feature type="helix" evidence="33">
    <location>
        <begin position="132"/>
        <end position="143"/>
    </location>
</feature>
<feature type="helix" evidence="33">
    <location>
        <begin position="145"/>
        <end position="147"/>
    </location>
</feature>
<feature type="strand" evidence="33">
    <location>
        <begin position="148"/>
        <end position="155"/>
    </location>
</feature>
<feature type="helix" evidence="33">
    <location>
        <begin position="162"/>
        <end position="171"/>
    </location>
</feature>
<feature type="helix" evidence="33">
    <location>
        <begin position="178"/>
        <end position="194"/>
    </location>
</feature>
<feature type="helix" evidence="33">
    <location>
        <begin position="204"/>
        <end position="211"/>
    </location>
</feature>
<feature type="helix" evidence="33">
    <location>
        <begin position="213"/>
        <end position="222"/>
    </location>
</feature>
<feature type="strand" evidence="33">
    <location>
        <begin position="239"/>
        <end position="243"/>
    </location>
</feature>
<feature type="strand" evidence="33">
    <location>
        <begin position="246"/>
        <end position="255"/>
    </location>
</feature>
<feature type="strand" evidence="33">
    <location>
        <begin position="258"/>
        <end position="264"/>
    </location>
</feature>
<feature type="strand" evidence="33">
    <location>
        <begin position="267"/>
        <end position="272"/>
    </location>
</feature>
<feature type="turn" evidence="33">
    <location>
        <begin position="277"/>
        <end position="279"/>
    </location>
</feature>
<feature type="helix" evidence="33">
    <location>
        <begin position="282"/>
        <end position="285"/>
    </location>
</feature>
<feature type="helix" evidence="33">
    <location>
        <begin position="288"/>
        <end position="300"/>
    </location>
</feature>
<feature type="turn" evidence="33">
    <location>
        <begin position="301"/>
        <end position="303"/>
    </location>
</feature>
<feature type="strand" evidence="33">
    <location>
        <begin position="306"/>
        <end position="312"/>
    </location>
</feature>
<feature type="helix" evidence="33">
    <location>
        <begin position="313"/>
        <end position="316"/>
    </location>
</feature>
<feature type="strand" evidence="33">
    <location>
        <begin position="319"/>
        <end position="326"/>
    </location>
</feature>
<feature type="helix" evidence="33">
    <location>
        <begin position="332"/>
        <end position="334"/>
    </location>
</feature>
<feature type="turn" evidence="33">
    <location>
        <begin position="335"/>
        <end position="339"/>
    </location>
</feature>
<feature type="helix" evidence="33">
    <location>
        <begin position="348"/>
        <end position="361"/>
    </location>
</feature>
<sequence length="364" mass="37494">MARTMRSRVVAGAVACAMSIAPFAGTTAVMTLATTHAAMAATAPAAGYAATRYPIILVHGLSGTDKYAGVLEYWYGIQEDLQQNGATVYVANLSGFQSDDGPNGRGEQLLAYVKTVLAATGATKVNLVGHSQGGLSSRYVAAVAPDLVASVTTIGTPHRGSEFADFVQDVLAYDPTGLSSSVIAAFVNVFGILTSSSHNTNQDALAALQTLTTARAATYNQNYPSAGLGAPGSCQTGAPTETVGGNTHLLYSWAGTAIQPTLSVFGVTGATDTSTLPLVDPANVLDLSTLALFGTGTVMINRGSGQNDGLVSKCSALYGKVLSTSYKWNHLDEINQLLGVRGAYAEDPVAVIRTHANRLKLAGV</sequence>
<keyword id="KW-0002">3D-structure</keyword>
<keyword id="KW-0106">Calcium</keyword>
<keyword id="KW-0903">Direct protein sequencing</keyword>
<keyword id="KW-1015">Disulfide bond</keyword>
<keyword id="KW-0378">Hydrolase</keyword>
<keyword id="KW-0442">Lipid degradation</keyword>
<keyword id="KW-0443">Lipid metabolism</keyword>
<keyword id="KW-0479">Metal-binding</keyword>
<keyword id="KW-0964">Secreted</keyword>
<keyword id="KW-0732">Signal</keyword>
<gene>
    <name evidence="14" type="primary">lip</name>
    <name evidence="13" type="synonym">lipA</name>
</gene>
<evidence type="ECO:0000250" key="1">
    <source>
        <dbReference type="UniProtKB" id="P26876"/>
    </source>
</evidence>
<evidence type="ECO:0000250" key="2">
    <source>
        <dbReference type="UniProtKB" id="Q05489"/>
    </source>
</evidence>
<evidence type="ECO:0000255" key="3"/>
<evidence type="ECO:0000269" key="4">
    <source>
    </source>
</evidence>
<evidence type="ECO:0000269" key="5">
    <source>
    </source>
</evidence>
<evidence type="ECO:0000269" key="6">
    <source>
    </source>
</evidence>
<evidence type="ECO:0000269" key="7">
    <source>
    </source>
</evidence>
<evidence type="ECO:0000269" key="8">
    <source>
    </source>
</evidence>
<evidence type="ECO:0000269" key="9">
    <source>
    </source>
</evidence>
<evidence type="ECO:0000269" key="10">
    <source>
    </source>
</evidence>
<evidence type="ECO:0000269" key="11">
    <source>
    </source>
</evidence>
<evidence type="ECO:0000269" key="12">
    <source>
    </source>
</evidence>
<evidence type="ECO:0000303" key="13">
    <source>
    </source>
</evidence>
<evidence type="ECO:0000305" key="14"/>
<evidence type="ECO:0000305" key="15">
    <source>
    </source>
</evidence>
<evidence type="ECO:0000305" key="16">
    <source>
    </source>
</evidence>
<evidence type="ECO:0000305" key="17">
    <source>
    </source>
</evidence>
<evidence type="ECO:0000305" key="18">
    <source>
    </source>
</evidence>
<evidence type="ECO:0000305" key="19">
    <source>
    </source>
</evidence>
<evidence type="ECO:0000305" key="20">
    <source>
    </source>
</evidence>
<evidence type="ECO:0000305" key="21">
    <source>
    </source>
</evidence>
<evidence type="ECO:0000305" key="22">
    <source>
    </source>
</evidence>
<evidence type="ECO:0007744" key="23">
    <source>
        <dbReference type="PDB" id="1HQD"/>
    </source>
</evidence>
<evidence type="ECO:0007744" key="24">
    <source>
        <dbReference type="PDB" id="1OIL"/>
    </source>
</evidence>
<evidence type="ECO:0007744" key="25">
    <source>
        <dbReference type="PDB" id="1YS1"/>
    </source>
</evidence>
<evidence type="ECO:0007744" key="26">
    <source>
        <dbReference type="PDB" id="1YS2"/>
    </source>
</evidence>
<evidence type="ECO:0007744" key="27">
    <source>
        <dbReference type="PDB" id="2LIP"/>
    </source>
</evidence>
<evidence type="ECO:0007744" key="28">
    <source>
        <dbReference type="PDB" id="2NW6"/>
    </source>
</evidence>
<evidence type="ECO:0007744" key="29">
    <source>
        <dbReference type="PDB" id="3LIP"/>
    </source>
</evidence>
<evidence type="ECO:0007744" key="30">
    <source>
        <dbReference type="PDB" id="4LIP"/>
    </source>
</evidence>
<evidence type="ECO:0007744" key="31">
    <source>
        <dbReference type="PDB" id="5LIP"/>
    </source>
</evidence>
<evidence type="ECO:0007829" key="32">
    <source>
        <dbReference type="PDB" id="1OIL"/>
    </source>
</evidence>
<evidence type="ECO:0007829" key="33">
    <source>
        <dbReference type="PDB" id="1YS1"/>
    </source>
</evidence>
<evidence type="ECO:0007829" key="34">
    <source>
        <dbReference type="PDB" id="2LIP"/>
    </source>
</evidence>
<evidence type="ECO:0007829" key="35">
    <source>
        <dbReference type="PDB" id="4LIP"/>
    </source>
</evidence>
<proteinExistence type="evidence at protein level"/>
<name>LIP_BURCE</name>
<dbReference type="EC" id="3.1.1.3" evidence="18 19"/>
<dbReference type="EMBL" id="M58494">
    <property type="protein sequence ID" value="AAA50466.1"/>
    <property type="molecule type" value="Genomic_DNA"/>
</dbReference>
<dbReference type="RefSeq" id="WP_226159495.1">
    <property type="nucleotide sequence ID" value="NZ_JAIZQB010000001.1"/>
</dbReference>
<dbReference type="PDB" id="1HQD">
    <property type="method" value="X-ray"/>
    <property type="resolution" value="2.30 A"/>
    <property type="chains" value="A=45-364"/>
</dbReference>
<dbReference type="PDB" id="1OIL">
    <property type="method" value="X-ray"/>
    <property type="resolution" value="2.10 A"/>
    <property type="chains" value="A/B=45-364"/>
</dbReference>
<dbReference type="PDB" id="1YS1">
    <property type="method" value="X-ray"/>
    <property type="resolution" value="1.10 A"/>
    <property type="chains" value="X=45-364"/>
</dbReference>
<dbReference type="PDB" id="1YS2">
    <property type="method" value="X-ray"/>
    <property type="resolution" value="1.50 A"/>
    <property type="chains" value="X=45-364"/>
</dbReference>
<dbReference type="PDB" id="2LIP">
    <property type="method" value="X-ray"/>
    <property type="resolution" value="2.10 A"/>
    <property type="chains" value="A=45-364"/>
</dbReference>
<dbReference type="PDB" id="2NW6">
    <property type="method" value="X-ray"/>
    <property type="resolution" value="1.80 A"/>
    <property type="chains" value="A=45-364"/>
</dbReference>
<dbReference type="PDB" id="3LIP">
    <property type="method" value="X-ray"/>
    <property type="resolution" value="2.00 A"/>
    <property type="chains" value="A=45-364"/>
</dbReference>
<dbReference type="PDB" id="4LIP">
    <property type="method" value="X-ray"/>
    <property type="resolution" value="1.75 A"/>
    <property type="chains" value="D/E=45-364"/>
</dbReference>
<dbReference type="PDB" id="5LIP">
    <property type="method" value="X-ray"/>
    <property type="resolution" value="2.90 A"/>
    <property type="chains" value="A=45-364"/>
</dbReference>
<dbReference type="PDBsum" id="1HQD"/>
<dbReference type="PDBsum" id="1OIL"/>
<dbReference type="PDBsum" id="1YS1"/>
<dbReference type="PDBsum" id="1YS2"/>
<dbReference type="PDBsum" id="2LIP"/>
<dbReference type="PDBsum" id="2NW6"/>
<dbReference type="PDBsum" id="3LIP"/>
<dbReference type="PDBsum" id="4LIP"/>
<dbReference type="PDBsum" id="5LIP"/>
<dbReference type="SMR" id="P22088"/>
<dbReference type="STRING" id="292.WI67_21750"/>
<dbReference type="DrugBank" id="DB08419">
    <property type="generic name" value="(1S)-1-(PHENOXYMETHYL)PROPYL METHYLPHOSPHONOCHLORIDOATE"/>
</dbReference>
<dbReference type="DrugBank" id="DB07990">
    <property type="generic name" value="(RP,SP)-O-(2R)-(1-PHENOXYBUT-2-YL)-METHYLPHOSPHONIC ACID CHLORIDE"/>
</dbReference>
<dbReference type="DrugBank" id="DB06965">
    <property type="generic name" value="Hexylphosphonic acid (R)-2-methyl-3-phenylpropyl ester"/>
</dbReference>
<dbReference type="DrugBank" id="DB06966">
    <property type="generic name" value="Hexylphosphonic acid (S)-2-methyl-3-phenylpropyl ester"/>
</dbReference>
<dbReference type="ESTHER" id="burce-lipaa">
    <property type="family name" value="Bacterial_lip_FamI.2"/>
</dbReference>
<dbReference type="eggNOG" id="COG1075">
    <property type="taxonomic scope" value="Bacteria"/>
</dbReference>
<dbReference type="BRENDA" id="3.1.1.3">
    <property type="organism ID" value="1028"/>
</dbReference>
<dbReference type="SABIO-RK" id="P22088"/>
<dbReference type="EvolutionaryTrace" id="P22088"/>
<dbReference type="GO" id="GO:0005576">
    <property type="term" value="C:extracellular region"/>
    <property type="evidence" value="ECO:0007669"/>
    <property type="project" value="UniProtKB-SubCell"/>
</dbReference>
<dbReference type="GO" id="GO:0046872">
    <property type="term" value="F:metal ion binding"/>
    <property type="evidence" value="ECO:0007669"/>
    <property type="project" value="UniProtKB-KW"/>
</dbReference>
<dbReference type="GO" id="GO:0004806">
    <property type="term" value="F:triacylglycerol lipase activity"/>
    <property type="evidence" value="ECO:0007669"/>
    <property type="project" value="UniProtKB-EC"/>
</dbReference>
<dbReference type="GO" id="GO:0016042">
    <property type="term" value="P:lipid catabolic process"/>
    <property type="evidence" value="ECO:0007669"/>
    <property type="project" value="UniProtKB-KW"/>
</dbReference>
<dbReference type="Gene3D" id="3.40.50.1820">
    <property type="entry name" value="alpha/beta hydrolase"/>
    <property type="match status" value="1"/>
</dbReference>
<dbReference type="InterPro" id="IPR000073">
    <property type="entry name" value="AB_hydrolase_1"/>
</dbReference>
<dbReference type="InterPro" id="IPR029058">
    <property type="entry name" value="AB_hydrolase_fold"/>
</dbReference>
<dbReference type="Pfam" id="PF00561">
    <property type="entry name" value="Abhydrolase_1"/>
    <property type="match status" value="1"/>
</dbReference>
<dbReference type="SUPFAM" id="SSF53474">
    <property type="entry name" value="alpha/beta-Hydrolases"/>
    <property type="match status" value="1"/>
</dbReference>
<dbReference type="PROSITE" id="PS00120">
    <property type="entry name" value="LIPASE_SER"/>
    <property type="match status" value="1"/>
</dbReference>
<accession>P22088</accession>
<reference key="1">
    <citation type="journal article" date="1991" name="J. Bacteriol.">
        <title>Cloning, sequence, and expression of a lipase gene from Pseudomonas cepacia: lipase production in heterologous hosts requires two Pseudomonas genes.</title>
        <authorList>
            <person name="Joergensen S."/>
            <person name="Skov K.W."/>
            <person name="Diderichsen B."/>
        </authorList>
    </citation>
    <scope>NUCLEOTIDE SEQUENCE [GENOMIC DNA]</scope>
    <scope>PROTEIN SEQUENCE OF 45-66</scope>
    <scope>NOMENCLATURE</scope>
    <source>
        <strain>DSM 3959</strain>
    </source>
</reference>
<reference key="2">
    <citation type="journal article" date="1991" name="J. Bacteriol.">
        <title>Extracellular lipase of Pseudomonas sp. strain ATCC 21808: purification, characterization, crystallization, and preliminary X-ray diffraction data.</title>
        <authorList>
            <person name="Kordel M."/>
            <person name="Hofmann B."/>
            <person name="Schomburg D."/>
            <person name="Schmid R.D."/>
        </authorList>
    </citation>
    <scope>PROTEIN SEQUENCE OF 45-68</scope>
    <scope>FUNCTION</scope>
    <scope>CATALYTIC ACTIVITY</scope>
    <scope>ACTIVITY REGULATION</scope>
    <scope>SUBSTRATE SPECIFICITY</scope>
    <scope>SUBUNIT</scope>
    <source>
        <strain>ATCC 21808 / FERM P-1431 / 156-A</strain>
    </source>
</reference>
<reference key="3">
    <citation type="journal article" date="1994" name="Biochim. Biophys. Acta">
        <title>Lipase of Pseudomonas cepacia for biotechnological purposes: purification, crystallization and characterization.</title>
        <authorList>
            <person name="Bornscheuer U."/>
            <person name="Reif O.W."/>
            <person name="Lausch R."/>
            <person name="Freitag R."/>
            <person name="Scheper T."/>
            <person name="Kolisis F.N."/>
            <person name="Menge U."/>
        </authorList>
    </citation>
    <scope>PROTEIN SEQUENCE OF 45-66</scope>
    <scope>FUNCTION</scope>
    <scope>CATALYTIC ACTIVITY</scope>
    <scope>SUBSTRATE SPECIFICITY</scope>
    <scope>SUBUNIT</scope>
</reference>
<reference key="4">
    <citation type="journal article" date="1997" name="Structure">
        <title>The crystal structure of a triacylglycerol lipase from Pseudomonas cepacia reveals a highly open conformation in the absence of a bound inhibitor.</title>
        <authorList>
            <person name="Kim K.K."/>
            <person name="Song H.K."/>
            <person name="Shin D.H."/>
            <person name="Hwang K.Y."/>
            <person name="Suh S.W."/>
        </authorList>
    </citation>
    <scope>X-RAY CRYSTALLOGRAPHY (2.10 ANGSTROMS) OF 45-364 IN COMPLEX WITH CALCIUM ION</scope>
    <scope>COFACTOR</scope>
    <scope>DISULFIDE BOND</scope>
    <scope>ACTIVE SITE</scope>
</reference>
<reference key="5">
    <citation type="journal article" date="1997" name="Structure">
        <title>The open conformation of a Pseudomonas lipase.</title>
        <authorList>
            <person name="Schrag J.D."/>
            <person name="Li Y."/>
            <person name="Cygler M."/>
            <person name="Lang D."/>
            <person name="Burgdorf T."/>
            <person name="Hecht H.-J."/>
            <person name="Schmid R."/>
            <person name="Schomburg D."/>
            <person name="Rydel T.J."/>
            <person name="Oliver J.D."/>
            <person name="Strickland L.C."/>
            <person name="Dunaway C.M."/>
            <person name="Larson S.B."/>
            <person name="Day J."/>
            <person name="McPherson A."/>
        </authorList>
    </citation>
    <scope>X-RAY CRYSTALLOGRAPHY (2.0 ANGSTROMS) OF 45-364 IN COMPLEX WITH CALCIUM ION</scope>
    <scope>COFACTOR</scope>
    <scope>ACTIVE SITE</scope>
</reference>
<reference key="6">
    <citation type="journal article" date="1998" name="Eur. J. Biochem.">
        <title>Structural basis of the chiral selectivity of Pseudomonas cepacia lipase.</title>
        <authorList>
            <person name="Lang D.A."/>
            <person name="Mannesse M.L."/>
            <person name="de Haas G.H."/>
            <person name="Verheij H.M."/>
            <person name="Dijkstra B.W."/>
        </authorList>
    </citation>
    <scope>X-RAY CRYSTALLOGRAPHY (1.75 ANGSTROMS) OF 45-364 IN COMPLEX WITH SUBSTRATE ANALOGS AND CALCIUM ION</scope>
    <scope>COFACTOR</scope>
    <scope>ACTIVITY REGULATION</scope>
    <scope>ACTIVE SITE</scope>
    <scope>SUBUNIT</scope>
    <source>
        <strain>ATCC 21808 / FERM P-1431 / 156-A</strain>
    </source>
</reference>
<reference key="7">
    <citation type="journal article" date="2001" name="Eur. J. Biochem.">
        <title>Complex of Burkholderia cepacia lipase with transition state analogue of 1-phenoxy-2-acetoxybutane: biocatalytic, structural and modelling study.</title>
        <authorList>
            <person name="Luic M."/>
            <person name="Tomic S."/>
            <person name="Lescic I."/>
            <person name="Ljubovic E."/>
            <person name="Sepac D."/>
            <person name="Sunjic V."/>
            <person name="Vitale L."/>
            <person name="Saenger W."/>
            <person name="Kojic-Prodic B."/>
        </authorList>
    </citation>
    <scope>X-RAY CRYSTALLOGRAPHY (2.3 ANGSTROMS) OF 45-364 IN COMPLEX WITH SUBSTRATE ANALOG AND CALCIUM ION</scope>
    <scope>COFACTOR</scope>
    <scope>ACTIVE SITE</scope>
</reference>
<reference key="8">
    <citation type="journal article" date="2005" name="Chem. Biol.">
        <title>Mirror-image packing in enantiomer discrimination molecular basis for the enantioselectivity of B.cepacia lipase toward 2-methyl-3-phenyl-1-propanol.</title>
        <authorList>
            <person name="Mezzetti A."/>
            <person name="Schrag J.D."/>
            <person name="Cheong C.S."/>
            <person name="Kazlauskas R.J."/>
        </authorList>
    </citation>
    <scope>X-RAY CRYSTALLOGRAPHY (1.10 ANGSTROMS) OF 45-364 IN COMPLEX WITH SUBSTRATE ANALOG AND CALCIUM ION</scope>
    <scope>COFACTOR</scope>
    <scope>ACTIVE SITE</scope>
</reference>
<reference key="9">
    <citation type="journal article" date="2008" name="J. Phys. Chem. B">
        <title>Combined X-ray diffraction and QM/MM study of the Burkholderia cepacia lipase-catalyzed secondary alcohol esterification.</title>
        <authorList>
            <person name="Luic M."/>
            <person name="Stefanic Z."/>
            <person name="Ceilinger I."/>
            <person name="Hodoscek M."/>
            <person name="Janezic D."/>
            <person name="Lenac T."/>
            <person name="Asler I.L."/>
            <person name="Sepac D."/>
            <person name="Tomic S."/>
        </authorList>
    </citation>
    <scope>X-RAY CRYSTALLOGRAPHY (1.80 ANGSTROMS) OF 45-364 IN COMPLEX WITH SUBSTRATE ANALOG AND CALCIUM ION</scope>
    <scope>COFACTOR</scope>
    <scope>ACTIVE SITE</scope>
</reference>
<organism>
    <name type="scientific">Burkholderia cepacia</name>
    <name type="common">Pseudomonas cepacia</name>
    <dbReference type="NCBI Taxonomy" id="292"/>
    <lineage>
        <taxon>Bacteria</taxon>
        <taxon>Pseudomonadati</taxon>
        <taxon>Pseudomonadota</taxon>
        <taxon>Betaproteobacteria</taxon>
        <taxon>Burkholderiales</taxon>
        <taxon>Burkholderiaceae</taxon>
        <taxon>Burkholderia</taxon>
        <taxon>Burkholderia cepacia complex</taxon>
    </lineage>
</organism>
<protein>
    <recommendedName>
        <fullName evidence="13">Triacylglycerol lipase</fullName>
        <ecNumber evidence="18 19">3.1.1.3</ecNumber>
    </recommendedName>
    <alternativeName>
        <fullName evidence="13">Extracellular lipase</fullName>
    </alternativeName>
    <alternativeName>
        <fullName evidence="1">Triacylglycerol ester hydrolase</fullName>
    </alternativeName>
</protein>
<comment type="function">
    <text evidence="7 9">Catalyzes the hydrolysis of triacylglycerol. It shows a preference for triacylglycerols with a chain length between 6 and 12 carbons.</text>
</comment>
<comment type="catalytic activity">
    <reaction evidence="18 19">
        <text>a triacylglycerol + H2O = a diacylglycerol + a fatty acid + H(+)</text>
        <dbReference type="Rhea" id="RHEA:12044"/>
        <dbReference type="ChEBI" id="CHEBI:15377"/>
        <dbReference type="ChEBI" id="CHEBI:15378"/>
        <dbReference type="ChEBI" id="CHEBI:17855"/>
        <dbReference type="ChEBI" id="CHEBI:18035"/>
        <dbReference type="ChEBI" id="CHEBI:28868"/>
        <dbReference type="EC" id="3.1.1.3"/>
    </reaction>
</comment>
<comment type="cofactor">
    <cofactor evidence="4 5 6 10 11 12">
        <name>Ca(2+)</name>
        <dbReference type="ChEBI" id="CHEBI:29108"/>
    </cofactor>
    <text evidence="4 5 6 10 11 12">Binds 1 Ca(2+) ion per subunit.</text>
</comment>
<comment type="activity regulation">
    <text evidence="7 12">Inhibited by RC-(Rp,Sp)- and SC-(Rp,Sp)-1,2-dioctylcarbamoylglycero-3-O-p-nitrophenyl octylphosphonate (PubMed:9660188). Also inhibited by diethyl-p-nitrophenylphosphate (E600) (PubMed:1856176).</text>
</comment>
<comment type="subunit">
    <text evidence="12 18 19">Monomer.</text>
</comment>
<comment type="subcellular location">
    <subcellularLocation>
        <location evidence="2">Secreted</location>
    </subcellularLocation>
</comment>
<comment type="similarity">
    <text evidence="14">Belongs to the AB hydrolase superfamily. Pseudomonas lipase family.</text>
</comment>